<accession>P0CZ89</accession>
<accession>Q8K8I8</accession>
<evidence type="ECO:0000255" key="1">
    <source>
        <dbReference type="HAMAP-Rule" id="MF_00258"/>
    </source>
</evidence>
<keyword id="KW-0133">Cell shape</keyword>
<keyword id="KW-0961">Cell wall biogenesis/degradation</keyword>
<keyword id="KW-0413">Isomerase</keyword>
<keyword id="KW-0573">Peptidoglycan synthesis</keyword>
<proteinExistence type="inferred from homology"/>
<name>MURI_STRPQ</name>
<protein>
    <recommendedName>
        <fullName evidence="1">Glutamate racemase</fullName>
        <ecNumber evidence="1">5.1.1.3</ecNumber>
    </recommendedName>
</protein>
<dbReference type="EC" id="5.1.1.3" evidence="1"/>
<dbReference type="EMBL" id="BA000034">
    <property type="protein sequence ID" value="BAC64692.1"/>
    <property type="molecule type" value="Genomic_DNA"/>
</dbReference>
<dbReference type="SMR" id="P0CZ89"/>
<dbReference type="KEGG" id="sps:SPs1597"/>
<dbReference type="HOGENOM" id="CLU_052344_0_2_9"/>
<dbReference type="UniPathway" id="UPA00219"/>
<dbReference type="GO" id="GO:0008881">
    <property type="term" value="F:glutamate racemase activity"/>
    <property type="evidence" value="ECO:0007669"/>
    <property type="project" value="UniProtKB-UniRule"/>
</dbReference>
<dbReference type="GO" id="GO:0071555">
    <property type="term" value="P:cell wall organization"/>
    <property type="evidence" value="ECO:0007669"/>
    <property type="project" value="UniProtKB-KW"/>
</dbReference>
<dbReference type="GO" id="GO:0009252">
    <property type="term" value="P:peptidoglycan biosynthetic process"/>
    <property type="evidence" value="ECO:0007669"/>
    <property type="project" value="UniProtKB-UniRule"/>
</dbReference>
<dbReference type="GO" id="GO:0008360">
    <property type="term" value="P:regulation of cell shape"/>
    <property type="evidence" value="ECO:0007669"/>
    <property type="project" value="UniProtKB-KW"/>
</dbReference>
<dbReference type="FunFam" id="3.40.50.1860:FF:000002">
    <property type="entry name" value="Glutamate racemase"/>
    <property type="match status" value="1"/>
</dbReference>
<dbReference type="Gene3D" id="3.40.50.1860">
    <property type="match status" value="2"/>
</dbReference>
<dbReference type="HAMAP" id="MF_00258">
    <property type="entry name" value="Glu_racemase"/>
    <property type="match status" value="1"/>
</dbReference>
<dbReference type="InterPro" id="IPR015942">
    <property type="entry name" value="Asp/Glu/hydantoin_racemase"/>
</dbReference>
<dbReference type="InterPro" id="IPR001920">
    <property type="entry name" value="Asp/Glu_race"/>
</dbReference>
<dbReference type="InterPro" id="IPR033134">
    <property type="entry name" value="Asp/Glu_racemase_AS_2"/>
</dbReference>
<dbReference type="InterPro" id="IPR004391">
    <property type="entry name" value="Glu_race"/>
</dbReference>
<dbReference type="NCBIfam" id="TIGR00067">
    <property type="entry name" value="glut_race"/>
    <property type="match status" value="1"/>
</dbReference>
<dbReference type="NCBIfam" id="NF002035">
    <property type="entry name" value="PRK00865.1-3"/>
    <property type="match status" value="1"/>
</dbReference>
<dbReference type="PANTHER" id="PTHR21198">
    <property type="entry name" value="GLUTAMATE RACEMASE"/>
    <property type="match status" value="1"/>
</dbReference>
<dbReference type="PANTHER" id="PTHR21198:SF2">
    <property type="entry name" value="GLUTAMATE RACEMASE"/>
    <property type="match status" value="1"/>
</dbReference>
<dbReference type="Pfam" id="PF01177">
    <property type="entry name" value="Asp_Glu_race"/>
    <property type="match status" value="1"/>
</dbReference>
<dbReference type="SUPFAM" id="SSF53681">
    <property type="entry name" value="Aspartate/glutamate racemase"/>
    <property type="match status" value="2"/>
</dbReference>
<dbReference type="PROSITE" id="PS00924">
    <property type="entry name" value="ASP_GLU_RACEMASE_2"/>
    <property type="match status" value="1"/>
</dbReference>
<comment type="function">
    <text evidence="1">Provides the (R)-glutamate required for cell wall biosynthesis.</text>
</comment>
<comment type="catalytic activity">
    <reaction evidence="1">
        <text>L-glutamate = D-glutamate</text>
        <dbReference type="Rhea" id="RHEA:12813"/>
        <dbReference type="ChEBI" id="CHEBI:29985"/>
        <dbReference type="ChEBI" id="CHEBI:29986"/>
        <dbReference type="EC" id="5.1.1.3"/>
    </reaction>
</comment>
<comment type="pathway">
    <text evidence="1">Cell wall biogenesis; peptidoglycan biosynthesis.</text>
</comment>
<comment type="similarity">
    <text evidence="1">Belongs to the aspartate/glutamate racemases family.</text>
</comment>
<reference key="1">
    <citation type="journal article" date="2003" name="Genome Res.">
        <title>Genome sequence of an M3 strain of Streptococcus pyogenes reveals a large-scale genomic rearrangement in invasive strains and new insights into phage evolution.</title>
        <authorList>
            <person name="Nakagawa I."/>
            <person name="Kurokawa K."/>
            <person name="Yamashita A."/>
            <person name="Nakata M."/>
            <person name="Tomiyasu Y."/>
            <person name="Okahashi N."/>
            <person name="Kawabata S."/>
            <person name="Yamazaki K."/>
            <person name="Shiba T."/>
            <person name="Yasunaga T."/>
            <person name="Hayashi H."/>
            <person name="Hattori M."/>
            <person name="Hamada S."/>
        </authorList>
    </citation>
    <scope>NUCLEOTIDE SEQUENCE [LARGE SCALE GENOMIC DNA]</scope>
    <source>
        <strain>SSI-1</strain>
    </source>
</reference>
<organism>
    <name type="scientific">Streptococcus pyogenes serotype M3 (strain SSI-1)</name>
    <dbReference type="NCBI Taxonomy" id="193567"/>
    <lineage>
        <taxon>Bacteria</taxon>
        <taxon>Bacillati</taxon>
        <taxon>Bacillota</taxon>
        <taxon>Bacilli</taxon>
        <taxon>Lactobacillales</taxon>
        <taxon>Streptococcaceae</taxon>
        <taxon>Streptococcus</taxon>
    </lineage>
</organism>
<gene>
    <name evidence="1" type="primary">murI</name>
    <name type="synonym">glr</name>
    <name type="ordered locus">SPs1597</name>
</gene>
<feature type="chain" id="PRO_0000411282" description="Glutamate racemase">
    <location>
        <begin position="1"/>
        <end position="264"/>
    </location>
</feature>
<feature type="active site" description="Proton donor/acceptor" evidence="1">
    <location>
        <position position="73"/>
    </location>
</feature>
<feature type="active site" description="Proton donor/acceptor" evidence="1">
    <location>
        <position position="183"/>
    </location>
</feature>
<feature type="binding site" evidence="1">
    <location>
        <begin position="10"/>
        <end position="11"/>
    </location>
    <ligand>
        <name>substrate</name>
    </ligand>
</feature>
<feature type="binding site" evidence="1">
    <location>
        <begin position="42"/>
        <end position="43"/>
    </location>
    <ligand>
        <name>substrate</name>
    </ligand>
</feature>
<feature type="binding site" evidence="1">
    <location>
        <begin position="74"/>
        <end position="75"/>
    </location>
    <ligand>
        <name>substrate</name>
    </ligand>
</feature>
<feature type="binding site" evidence="1">
    <location>
        <begin position="184"/>
        <end position="185"/>
    </location>
    <ligand>
        <name>substrate</name>
    </ligand>
</feature>
<sequence>MDTRPIGFLDSGVGGLTVVCELIRQLPHEKIVYIGDSARAPYGPRPKKQIKEYTWELVNFLLTQNVKMIVFACNTATAVAWEEVKAALDIPVLGVVLPGASAAIKSTTKGQVGVIGTPMTVASDIYRKKIQLLAPSVQVRSLACPKFVPIVESNEMCSSIAKKIVYDSLAPLVGKIDTLVLGCTHYPLLRPIIQNVMGPSVKLIDSGAECVRDISVLLNYFDINGNYHQKAVKHRFFTTANPEIFQEIASIWLKQKINVEHVTL</sequence>